<organism>
    <name type="scientific">Sus scrofa</name>
    <name type="common">Pig</name>
    <dbReference type="NCBI Taxonomy" id="9823"/>
    <lineage>
        <taxon>Eukaryota</taxon>
        <taxon>Metazoa</taxon>
        <taxon>Chordata</taxon>
        <taxon>Craniata</taxon>
        <taxon>Vertebrata</taxon>
        <taxon>Euteleostomi</taxon>
        <taxon>Mammalia</taxon>
        <taxon>Eutheria</taxon>
        <taxon>Laurasiatheria</taxon>
        <taxon>Artiodactyla</taxon>
        <taxon>Suina</taxon>
        <taxon>Suidae</taxon>
        <taxon>Sus</taxon>
    </lineage>
</organism>
<comment type="function">
    <text evidence="3">Catalytic subunit of the heterodimeric RalGAP1 complex which acts as a GTPase activator for the Ras-like small GTPases RALA and RALB.</text>
</comment>
<comment type="subunit">
    <text evidence="1 3">Component of the heterodimeric RalGAP1 complex with RALGAPB. Heterodimerization is required for activity. Interacts with the HLH region of TCF3/isoform E12.</text>
</comment>
<comment type="subcellular location">
    <subcellularLocation>
        <location evidence="1">Cytoplasm</location>
    </subcellularLocation>
    <subcellularLocation>
        <location evidence="1">Nucleus</location>
    </subcellularLocation>
    <text evidence="1">Translocated to the nucleus, when associated with TCF3/E12.</text>
</comment>
<name>RGPA1_PIG</name>
<evidence type="ECO:0000250" key="1">
    <source>
        <dbReference type="UniProtKB" id="Q6GYP7"/>
    </source>
</evidence>
<evidence type="ECO:0000250" key="2">
    <source>
        <dbReference type="UniProtKB" id="Q6GYQ0"/>
    </source>
</evidence>
<evidence type="ECO:0000269" key="3">
    <source>
    </source>
</evidence>
<evidence type="ECO:0000303" key="4">
    <source>
    </source>
</evidence>
<evidence type="ECO:0000305" key="5"/>
<sequence length="337" mass="39654">MFSKKPHGDVKKSTQKVLDTKKDALTRLKHLRIVIENAESIDLKQFFDQHFSHIYYVFFENFVTIEASLKQKGHKSQREELDAILFIFEKILQLLPERIHQRWQFHSIGLILKKLLHTGNSLKIRREGVRLFLLWLQALQNNCSREQLWMFSCLIPGFSAPQSEYGPRTLDNLINPPLNLQETQVTIEEITPLVPPQSGDKGQEDLTSYFLEALLKYIVIQVKSLEWKNKENQERGFSFLFSHFKKYYLPYIFPNICKENSLYHPVLDIPQMRPKPHYVMIKKDAETNEAIYCTKEPFIKARVIVIRWLVSFWLEPKPHTGPHIPGMEGEVLPKNIQ</sequence>
<dbReference type="EMBL" id="CT797476">
    <property type="status" value="NOT_ANNOTATED_CDS"/>
    <property type="molecule type" value="Genomic_DNA"/>
</dbReference>
<dbReference type="SMR" id="P86409"/>
<dbReference type="STRING" id="9823.ENSSSCP00000048093"/>
<dbReference type="PaxDb" id="9823-ENSSSCP00000020297"/>
<dbReference type="eggNOG" id="KOG3686">
    <property type="taxonomic scope" value="Eukaryota"/>
</dbReference>
<dbReference type="InParanoid" id="P86409"/>
<dbReference type="Proteomes" id="UP000008227">
    <property type="component" value="Unplaced"/>
</dbReference>
<dbReference type="Proteomes" id="UP000314985">
    <property type="component" value="Unplaced"/>
</dbReference>
<dbReference type="Proteomes" id="UP000694570">
    <property type="component" value="Unplaced"/>
</dbReference>
<dbReference type="Proteomes" id="UP000694571">
    <property type="component" value="Unplaced"/>
</dbReference>
<dbReference type="Proteomes" id="UP000694720">
    <property type="component" value="Unplaced"/>
</dbReference>
<dbReference type="Proteomes" id="UP000694722">
    <property type="component" value="Unplaced"/>
</dbReference>
<dbReference type="Proteomes" id="UP000694723">
    <property type="component" value="Unplaced"/>
</dbReference>
<dbReference type="Proteomes" id="UP000694724">
    <property type="component" value="Unplaced"/>
</dbReference>
<dbReference type="Proteomes" id="UP000694725">
    <property type="component" value="Unplaced"/>
</dbReference>
<dbReference type="Proteomes" id="UP000694726">
    <property type="component" value="Unplaced"/>
</dbReference>
<dbReference type="Proteomes" id="UP000694727">
    <property type="component" value="Unplaced"/>
</dbReference>
<dbReference type="Proteomes" id="UP000694728">
    <property type="component" value="Unplaced"/>
</dbReference>
<dbReference type="GO" id="GO:0005737">
    <property type="term" value="C:cytoplasm"/>
    <property type="evidence" value="ECO:0000250"/>
    <property type="project" value="UniProtKB"/>
</dbReference>
<dbReference type="GO" id="GO:0005634">
    <property type="term" value="C:nucleus"/>
    <property type="evidence" value="ECO:0000250"/>
    <property type="project" value="UniProtKB"/>
</dbReference>
<dbReference type="GO" id="GO:0005096">
    <property type="term" value="F:GTPase activator activity"/>
    <property type="evidence" value="ECO:0000314"/>
    <property type="project" value="UniProtKB"/>
</dbReference>
<dbReference type="GO" id="GO:0090630">
    <property type="term" value="P:activation of GTPase activity"/>
    <property type="evidence" value="ECO:0000314"/>
    <property type="project" value="UniProtKB"/>
</dbReference>
<dbReference type="InterPro" id="IPR027107">
    <property type="entry name" value="Tuberin/Ral-act_asu"/>
</dbReference>
<dbReference type="PANTHER" id="PTHR10063:SF3">
    <property type="entry name" value="RAL GTPASE-ACTIVATING PROTEIN SUBUNIT ALPHA-1"/>
    <property type="match status" value="1"/>
</dbReference>
<dbReference type="PANTHER" id="PTHR10063">
    <property type="entry name" value="TUBERIN"/>
    <property type="match status" value="1"/>
</dbReference>
<reference evidence="5" key="1">
    <citation type="submission" date="2006-08" db="EMBL/GenBank/DDBJ databases">
        <authorList>
            <consortium name="Porcine genome sequencing project"/>
        </authorList>
    </citation>
    <scope>NUCLEOTIDE SEQUENCE [LARGE SCALE GENOMIC DNA]</scope>
</reference>
<reference evidence="5" key="2">
    <citation type="journal article" date="2009" name="J. Biol. Chem.">
        <title>Tuberous sclerosis tumor suppressor complex-like complexes act as GTPase-activating proteins for Ral GTPases.</title>
        <authorList>
            <person name="Shirakawa R."/>
            <person name="Fukai S."/>
            <person name="Kawato M."/>
            <person name="Higashi T."/>
            <person name="Kondo H."/>
            <person name="Ikeda T."/>
            <person name="Nakayama E."/>
            <person name="Okawa K."/>
            <person name="Nureki O."/>
            <person name="Kimura T."/>
            <person name="Kita T."/>
            <person name="Horiuchi H."/>
        </authorList>
    </citation>
    <scope>FUNCTION</scope>
    <scope>SUBUNIT</scope>
</reference>
<keyword id="KW-0963">Cytoplasm</keyword>
<keyword id="KW-0343">GTPase activation</keyword>
<keyword id="KW-0539">Nucleus</keyword>
<keyword id="KW-1185">Reference proteome</keyword>
<protein>
    <recommendedName>
        <fullName>Ral GTPase-activating protein subunit alpha-1</fullName>
    </recommendedName>
    <alternativeName>
        <fullName evidence="2">GAP-related-interacting partner to E12</fullName>
        <shortName evidence="2">GRIPE</shortName>
    </alternativeName>
    <alternativeName>
        <fullName evidence="2">GTPase-activating Rap/Ran-GAP domain-like 1</fullName>
    </alternativeName>
    <alternativeName>
        <fullName evidence="2">Tuberin-like protein 1</fullName>
    </alternativeName>
    <alternativeName>
        <fullName evidence="4">p240</fullName>
    </alternativeName>
</protein>
<gene>
    <name evidence="4" type="primary">RALGAPA1</name>
    <name evidence="2" type="synonym">GARNL1</name>
    <name evidence="2" type="synonym">TULIP1</name>
</gene>
<proteinExistence type="evidence at protein level"/>
<feature type="chain" id="PRO_0000390694" description="Ral GTPase-activating protein subunit alpha-1">
    <location>
        <begin position="1"/>
        <end position="337" status="greater than"/>
    </location>
</feature>
<feature type="non-terminal residue" evidence="5">
    <location>
        <position position="337"/>
    </location>
</feature>
<accession>P86409</accession>